<proteinExistence type="inferred from homology"/>
<dbReference type="EC" id="2.7.4.9" evidence="1"/>
<dbReference type="EMBL" id="CU633749">
    <property type="protein sequence ID" value="CAQ69444.1"/>
    <property type="molecule type" value="Genomic_DNA"/>
</dbReference>
<dbReference type="RefSeq" id="WP_012352767.1">
    <property type="nucleotide sequence ID" value="NC_010528.1"/>
</dbReference>
<dbReference type="SMR" id="B3R181"/>
<dbReference type="GeneID" id="29763033"/>
<dbReference type="KEGG" id="cti:RALTA_A1495"/>
<dbReference type="eggNOG" id="COG0125">
    <property type="taxonomic scope" value="Bacteria"/>
</dbReference>
<dbReference type="HOGENOM" id="CLU_049131_0_2_4"/>
<dbReference type="BioCyc" id="CTAI977880:RALTA_RS07165-MONOMER"/>
<dbReference type="Proteomes" id="UP000001692">
    <property type="component" value="Chromosome 1"/>
</dbReference>
<dbReference type="GO" id="GO:0005829">
    <property type="term" value="C:cytosol"/>
    <property type="evidence" value="ECO:0007669"/>
    <property type="project" value="TreeGrafter"/>
</dbReference>
<dbReference type="GO" id="GO:0005524">
    <property type="term" value="F:ATP binding"/>
    <property type="evidence" value="ECO:0007669"/>
    <property type="project" value="UniProtKB-UniRule"/>
</dbReference>
<dbReference type="GO" id="GO:0004798">
    <property type="term" value="F:dTMP kinase activity"/>
    <property type="evidence" value="ECO:0007669"/>
    <property type="project" value="UniProtKB-UniRule"/>
</dbReference>
<dbReference type="GO" id="GO:0006233">
    <property type="term" value="P:dTDP biosynthetic process"/>
    <property type="evidence" value="ECO:0007669"/>
    <property type="project" value="InterPro"/>
</dbReference>
<dbReference type="GO" id="GO:0006235">
    <property type="term" value="P:dTTP biosynthetic process"/>
    <property type="evidence" value="ECO:0007669"/>
    <property type="project" value="UniProtKB-UniRule"/>
</dbReference>
<dbReference type="GO" id="GO:0006227">
    <property type="term" value="P:dUDP biosynthetic process"/>
    <property type="evidence" value="ECO:0007669"/>
    <property type="project" value="TreeGrafter"/>
</dbReference>
<dbReference type="CDD" id="cd01672">
    <property type="entry name" value="TMPK"/>
    <property type="match status" value="1"/>
</dbReference>
<dbReference type="FunFam" id="3.40.50.300:FF:000225">
    <property type="entry name" value="Thymidylate kinase"/>
    <property type="match status" value="1"/>
</dbReference>
<dbReference type="Gene3D" id="3.40.50.300">
    <property type="entry name" value="P-loop containing nucleotide triphosphate hydrolases"/>
    <property type="match status" value="1"/>
</dbReference>
<dbReference type="HAMAP" id="MF_00165">
    <property type="entry name" value="Thymidylate_kinase"/>
    <property type="match status" value="1"/>
</dbReference>
<dbReference type="InterPro" id="IPR027417">
    <property type="entry name" value="P-loop_NTPase"/>
</dbReference>
<dbReference type="InterPro" id="IPR039430">
    <property type="entry name" value="Thymidylate_kin-like_dom"/>
</dbReference>
<dbReference type="InterPro" id="IPR018094">
    <property type="entry name" value="Thymidylate_kinase"/>
</dbReference>
<dbReference type="NCBIfam" id="TIGR00041">
    <property type="entry name" value="DTMP_kinase"/>
    <property type="match status" value="1"/>
</dbReference>
<dbReference type="PANTHER" id="PTHR10344">
    <property type="entry name" value="THYMIDYLATE KINASE"/>
    <property type="match status" value="1"/>
</dbReference>
<dbReference type="PANTHER" id="PTHR10344:SF4">
    <property type="entry name" value="UMP-CMP KINASE 2, MITOCHONDRIAL"/>
    <property type="match status" value="1"/>
</dbReference>
<dbReference type="Pfam" id="PF02223">
    <property type="entry name" value="Thymidylate_kin"/>
    <property type="match status" value="1"/>
</dbReference>
<dbReference type="SUPFAM" id="SSF52540">
    <property type="entry name" value="P-loop containing nucleoside triphosphate hydrolases"/>
    <property type="match status" value="1"/>
</dbReference>
<comment type="function">
    <text evidence="1">Phosphorylation of dTMP to form dTDP in both de novo and salvage pathways of dTTP synthesis.</text>
</comment>
<comment type="catalytic activity">
    <reaction evidence="1">
        <text>dTMP + ATP = dTDP + ADP</text>
        <dbReference type="Rhea" id="RHEA:13517"/>
        <dbReference type="ChEBI" id="CHEBI:30616"/>
        <dbReference type="ChEBI" id="CHEBI:58369"/>
        <dbReference type="ChEBI" id="CHEBI:63528"/>
        <dbReference type="ChEBI" id="CHEBI:456216"/>
        <dbReference type="EC" id="2.7.4.9"/>
    </reaction>
</comment>
<comment type="similarity">
    <text evidence="1">Belongs to the thymidylate kinase family.</text>
</comment>
<protein>
    <recommendedName>
        <fullName evidence="1">Thymidylate kinase</fullName>
        <ecNumber evidence="1">2.7.4.9</ecNumber>
    </recommendedName>
    <alternativeName>
        <fullName evidence="1">dTMP kinase</fullName>
    </alternativeName>
</protein>
<accession>B3R181</accession>
<sequence length="203" mass="22843">MRGKFITFEGIDGAGKSTHIDWVADRLRARADIAGVVTTREPGGTSLGEDLRQILLHRKMHLETEALLMFAARREHIAEVIAPALERGKWVISDRFTDATFAYQGGGRGLATERLEVLENWVQGSLQPDLTLLFDVPLETASARLAAARTPDKFEAESRAFFQRTRDEYLRRAAQSPHRFRVIDATRSIADIRDELEKILATI</sequence>
<reference key="1">
    <citation type="journal article" date="2008" name="Genome Res.">
        <title>Genome sequence of the beta-rhizobium Cupriavidus taiwanensis and comparative genomics of rhizobia.</title>
        <authorList>
            <person name="Amadou C."/>
            <person name="Pascal G."/>
            <person name="Mangenot S."/>
            <person name="Glew M."/>
            <person name="Bontemps C."/>
            <person name="Capela D."/>
            <person name="Carrere S."/>
            <person name="Cruveiller S."/>
            <person name="Dossat C."/>
            <person name="Lajus A."/>
            <person name="Marchetti M."/>
            <person name="Poinsot V."/>
            <person name="Rouy Z."/>
            <person name="Servin B."/>
            <person name="Saad M."/>
            <person name="Schenowitz C."/>
            <person name="Barbe V."/>
            <person name="Batut J."/>
            <person name="Medigue C."/>
            <person name="Masson-Boivin C."/>
        </authorList>
    </citation>
    <scope>NUCLEOTIDE SEQUENCE [LARGE SCALE GENOMIC DNA]</scope>
    <source>
        <strain>DSM 17343 / BCRC 17206 / CCUG 44338 / CIP 107171 / LMG 19424 / R1</strain>
    </source>
</reference>
<name>KTHY_CUPTR</name>
<organism>
    <name type="scientific">Cupriavidus taiwanensis (strain DSM 17343 / BCRC 17206 / CCUG 44338 / CIP 107171 / LMG 19424 / R1)</name>
    <name type="common">Ralstonia taiwanensis (strain LMG 19424)</name>
    <dbReference type="NCBI Taxonomy" id="977880"/>
    <lineage>
        <taxon>Bacteria</taxon>
        <taxon>Pseudomonadati</taxon>
        <taxon>Pseudomonadota</taxon>
        <taxon>Betaproteobacteria</taxon>
        <taxon>Burkholderiales</taxon>
        <taxon>Burkholderiaceae</taxon>
        <taxon>Cupriavidus</taxon>
    </lineage>
</organism>
<evidence type="ECO:0000255" key="1">
    <source>
        <dbReference type="HAMAP-Rule" id="MF_00165"/>
    </source>
</evidence>
<feature type="chain" id="PRO_1000123566" description="Thymidylate kinase">
    <location>
        <begin position="1"/>
        <end position="203"/>
    </location>
</feature>
<feature type="binding site" evidence="1">
    <location>
        <begin position="10"/>
        <end position="17"/>
    </location>
    <ligand>
        <name>ATP</name>
        <dbReference type="ChEBI" id="CHEBI:30616"/>
    </ligand>
</feature>
<keyword id="KW-0067">ATP-binding</keyword>
<keyword id="KW-0418">Kinase</keyword>
<keyword id="KW-0545">Nucleotide biosynthesis</keyword>
<keyword id="KW-0547">Nucleotide-binding</keyword>
<keyword id="KW-0808">Transferase</keyword>
<gene>
    <name evidence="1" type="primary">tmk</name>
    <name type="ordered locus">RALTA_A1495</name>
</gene>